<keyword id="KW-0002">3D-structure</keyword>
<keyword id="KW-0004">4Fe-4S</keyword>
<keyword id="KW-0148">Chlorophyll</keyword>
<keyword id="KW-0157">Chromophore</keyword>
<keyword id="KW-0194">Cyanelle</keyword>
<keyword id="KW-0249">Electron transport</keyword>
<keyword id="KW-0408">Iron</keyword>
<keyword id="KW-0411">Iron-sulfur</keyword>
<keyword id="KW-0460">Magnesium</keyword>
<keyword id="KW-0472">Membrane</keyword>
<keyword id="KW-0479">Metal-binding</keyword>
<keyword id="KW-0560">Oxidoreductase</keyword>
<keyword id="KW-0602">Photosynthesis</keyword>
<keyword id="KW-0603">Photosystem I</keyword>
<keyword id="KW-0934">Plastid</keyword>
<keyword id="KW-0793">Thylakoid</keyword>
<keyword id="KW-0812">Transmembrane</keyword>
<keyword id="KW-1133">Transmembrane helix</keyword>
<keyword id="KW-0813">Transport</keyword>
<feature type="chain" id="PRO_0000088543" description="Photosystem I P700 chlorophyll a apoprotein A1">
    <location>
        <begin position="1"/>
        <end position="752"/>
    </location>
</feature>
<feature type="transmembrane region" description="Helical; Name=I" evidence="2">
    <location>
        <begin position="73"/>
        <end position="96"/>
    </location>
</feature>
<feature type="transmembrane region" description="Helical; Name=II" evidence="2">
    <location>
        <begin position="159"/>
        <end position="182"/>
    </location>
</feature>
<feature type="transmembrane region" description="Helical; Name=III" evidence="2">
    <location>
        <begin position="198"/>
        <end position="222"/>
    </location>
</feature>
<feature type="transmembrane region" description="Helical; Name=IV" evidence="2">
    <location>
        <begin position="294"/>
        <end position="312"/>
    </location>
</feature>
<feature type="transmembrane region" description="Helical; Name=V" evidence="2">
    <location>
        <begin position="349"/>
        <end position="372"/>
    </location>
</feature>
<feature type="transmembrane region" description="Helical; Name=VI" evidence="2">
    <location>
        <begin position="388"/>
        <end position="414"/>
    </location>
</feature>
<feature type="transmembrane region" description="Helical; Name=VII" evidence="2">
    <location>
        <begin position="436"/>
        <end position="458"/>
    </location>
</feature>
<feature type="transmembrane region" description="Helical; Name=VIII" evidence="2">
    <location>
        <begin position="533"/>
        <end position="551"/>
    </location>
</feature>
<feature type="transmembrane region" description="Helical; Name=IX" evidence="2">
    <location>
        <begin position="591"/>
        <end position="612"/>
    </location>
</feature>
<feature type="transmembrane region" description="Helical; Name=X" evidence="2">
    <location>
        <begin position="666"/>
        <end position="688"/>
    </location>
</feature>
<feature type="transmembrane region" description="Helical; Name=XI" evidence="2">
    <location>
        <begin position="726"/>
        <end position="746"/>
    </location>
</feature>
<feature type="binding site" evidence="2">
    <location>
        <position position="575"/>
    </location>
    <ligand>
        <name>[4Fe-4S] cluster</name>
        <dbReference type="ChEBI" id="CHEBI:49883"/>
        <note>ligand shared between dimeric partners</note>
    </ligand>
</feature>
<feature type="binding site" evidence="2">
    <location>
        <position position="584"/>
    </location>
    <ligand>
        <name>[4Fe-4S] cluster</name>
        <dbReference type="ChEBI" id="CHEBI:49883"/>
        <note>ligand shared between dimeric partners</note>
    </ligand>
</feature>
<feature type="binding site" description="axial binding residue" evidence="2">
    <location>
        <position position="677"/>
    </location>
    <ligand>
        <name>chlorophyll a'</name>
        <dbReference type="ChEBI" id="CHEBI:189419"/>
        <label>A1</label>
    </ligand>
    <ligandPart>
        <name>Mg</name>
        <dbReference type="ChEBI" id="CHEBI:25107"/>
    </ligandPart>
</feature>
<feature type="binding site" description="axial binding residue" evidence="2">
    <location>
        <position position="685"/>
    </location>
    <ligand>
        <name>chlorophyll a</name>
        <dbReference type="ChEBI" id="CHEBI:58416"/>
        <label>A3</label>
    </ligand>
    <ligandPart>
        <name>Mg</name>
        <dbReference type="ChEBI" id="CHEBI:25107"/>
    </ligandPart>
</feature>
<feature type="binding site" evidence="2">
    <location>
        <position position="693"/>
    </location>
    <ligand>
        <name>chlorophyll a</name>
        <dbReference type="ChEBI" id="CHEBI:58416"/>
        <label>A3</label>
    </ligand>
</feature>
<feature type="binding site" evidence="2">
    <location>
        <position position="694"/>
    </location>
    <ligand>
        <name>phylloquinone</name>
        <dbReference type="ChEBI" id="CHEBI:18067"/>
        <label>A</label>
    </ligand>
</feature>
<feature type="strand" evidence="4">
    <location>
        <begin position="17"/>
        <end position="19"/>
    </location>
</feature>
<feature type="turn" evidence="4">
    <location>
        <begin position="27"/>
        <end position="29"/>
    </location>
</feature>
<feature type="turn" evidence="4">
    <location>
        <begin position="32"/>
        <end position="35"/>
    </location>
</feature>
<feature type="turn" evidence="4">
    <location>
        <begin position="37"/>
        <end position="41"/>
    </location>
</feature>
<feature type="strand" evidence="4">
    <location>
        <begin position="44"/>
        <end position="46"/>
    </location>
</feature>
<feature type="helix" evidence="4">
    <location>
        <begin position="47"/>
        <end position="54"/>
    </location>
</feature>
<feature type="strand" evidence="4">
    <location>
        <begin position="55"/>
        <end position="57"/>
    </location>
</feature>
<feature type="turn" evidence="4">
    <location>
        <begin position="59"/>
        <end position="62"/>
    </location>
</feature>
<feature type="helix" evidence="4">
    <location>
        <begin position="66"/>
        <end position="96"/>
    </location>
</feature>
<feature type="helix" evidence="4">
    <location>
        <begin position="101"/>
        <end position="106"/>
    </location>
</feature>
<feature type="turn" evidence="4">
    <location>
        <begin position="108"/>
        <end position="110"/>
    </location>
</feature>
<feature type="helix" evidence="4">
    <location>
        <begin position="124"/>
        <end position="126"/>
    </location>
</feature>
<feature type="strand" evidence="4">
    <location>
        <begin position="127"/>
        <end position="132"/>
    </location>
</feature>
<feature type="strand" evidence="4">
    <location>
        <begin position="135"/>
        <end position="139"/>
    </location>
</feature>
<feature type="helix" evidence="4">
    <location>
        <begin position="144"/>
        <end position="151"/>
    </location>
</feature>
<feature type="helix" evidence="4">
    <location>
        <begin position="156"/>
        <end position="182"/>
    </location>
</feature>
<feature type="strand" evidence="4">
    <location>
        <begin position="184"/>
        <end position="186"/>
    </location>
</feature>
<feature type="helix" evidence="4">
    <location>
        <begin position="188"/>
        <end position="191"/>
    </location>
</feature>
<feature type="helix" evidence="4">
    <location>
        <begin position="194"/>
        <end position="203"/>
    </location>
</feature>
<feature type="turn" evidence="4">
    <location>
        <begin position="204"/>
        <end position="206"/>
    </location>
</feature>
<feature type="helix" evidence="4">
    <location>
        <begin position="207"/>
        <end position="219"/>
    </location>
</feature>
<feature type="helix" evidence="4">
    <location>
        <begin position="221"/>
        <end position="230"/>
    </location>
</feature>
<feature type="turn" evidence="4">
    <location>
        <begin position="234"/>
        <end position="236"/>
    </location>
</feature>
<feature type="helix" evidence="4">
    <location>
        <begin position="242"/>
        <end position="245"/>
    </location>
</feature>
<feature type="helix" evidence="4">
    <location>
        <begin position="247"/>
        <end position="250"/>
    </location>
</feature>
<feature type="strand" evidence="4">
    <location>
        <begin position="253"/>
        <end position="255"/>
    </location>
</feature>
<feature type="strand" evidence="4">
    <location>
        <begin position="257"/>
        <end position="259"/>
    </location>
</feature>
<feature type="helix" evidence="4">
    <location>
        <begin position="262"/>
        <end position="265"/>
    </location>
</feature>
<feature type="helix" evidence="4">
    <location>
        <begin position="269"/>
        <end position="272"/>
    </location>
</feature>
<feature type="turn" evidence="4">
    <location>
        <begin position="273"/>
        <end position="275"/>
    </location>
</feature>
<feature type="turn" evidence="4">
    <location>
        <begin position="284"/>
        <end position="286"/>
    </location>
</feature>
<feature type="strand" evidence="4">
    <location>
        <begin position="287"/>
        <end position="289"/>
    </location>
</feature>
<feature type="helix" evidence="4">
    <location>
        <begin position="291"/>
        <end position="308"/>
    </location>
</feature>
<feature type="helix" evidence="4">
    <location>
        <begin position="323"/>
        <end position="326"/>
    </location>
</feature>
<feature type="strand" evidence="4">
    <location>
        <begin position="332"/>
        <end position="334"/>
    </location>
</feature>
<feature type="turn" evidence="4">
    <location>
        <begin position="335"/>
        <end position="340"/>
    </location>
</feature>
<feature type="helix" evidence="4">
    <location>
        <begin position="341"/>
        <end position="345"/>
    </location>
</feature>
<feature type="helix" evidence="4">
    <location>
        <begin position="349"/>
        <end position="372"/>
    </location>
</feature>
<feature type="strand" evidence="3">
    <location>
        <begin position="380"/>
        <end position="382"/>
    </location>
</feature>
<feature type="helix" evidence="4">
    <location>
        <begin position="384"/>
        <end position="415"/>
    </location>
</feature>
<feature type="turn" evidence="4">
    <location>
        <begin position="419"/>
        <end position="421"/>
    </location>
</feature>
<feature type="strand" evidence="4">
    <location>
        <begin position="423"/>
        <end position="425"/>
    </location>
</feature>
<feature type="helix" evidence="4">
    <location>
        <begin position="426"/>
        <end position="431"/>
    </location>
</feature>
<feature type="helix" evidence="4">
    <location>
        <begin position="434"/>
        <end position="464"/>
    </location>
</feature>
<feature type="strand" evidence="4">
    <location>
        <begin position="470"/>
        <end position="477"/>
    </location>
</feature>
<feature type="helix" evidence="4">
    <location>
        <begin position="482"/>
        <end position="490"/>
    </location>
</feature>
<feature type="turn" evidence="4">
    <location>
        <begin position="491"/>
        <end position="493"/>
    </location>
</feature>
<feature type="turn" evidence="4">
    <location>
        <begin position="496"/>
        <end position="498"/>
    </location>
</feature>
<feature type="strand" evidence="4">
    <location>
        <begin position="508"/>
        <end position="511"/>
    </location>
</feature>
<feature type="strand" evidence="4">
    <location>
        <begin position="515"/>
        <end position="517"/>
    </location>
</feature>
<feature type="strand" evidence="4">
    <location>
        <begin position="520"/>
        <end position="523"/>
    </location>
</feature>
<feature type="helix" evidence="4">
    <location>
        <begin position="530"/>
        <end position="555"/>
    </location>
</feature>
<feature type="turn" evidence="4">
    <location>
        <begin position="564"/>
        <end position="569"/>
    </location>
</feature>
<feature type="strand" evidence="4">
    <location>
        <begin position="574"/>
        <end position="576"/>
    </location>
</feature>
<feature type="helix" evidence="4">
    <location>
        <begin position="588"/>
        <end position="617"/>
    </location>
</feature>
<feature type="strand" evidence="4">
    <location>
        <begin position="620"/>
        <end position="622"/>
    </location>
</feature>
<feature type="strand" evidence="3">
    <location>
        <begin position="624"/>
        <end position="626"/>
    </location>
</feature>
<feature type="strand" evidence="4">
    <location>
        <begin position="628"/>
        <end position="632"/>
    </location>
</feature>
<feature type="helix" evidence="4">
    <location>
        <begin position="636"/>
        <end position="639"/>
    </location>
</feature>
<feature type="helix" evidence="4">
    <location>
        <begin position="643"/>
        <end position="648"/>
    </location>
</feature>
<feature type="turn" evidence="4">
    <location>
        <begin position="649"/>
        <end position="655"/>
    </location>
</feature>
<feature type="helix" evidence="4">
    <location>
        <begin position="656"/>
        <end position="659"/>
    </location>
</feature>
<feature type="turn" evidence="3">
    <location>
        <begin position="660"/>
        <end position="663"/>
    </location>
</feature>
<feature type="helix" evidence="4">
    <location>
        <begin position="667"/>
        <end position="687"/>
    </location>
</feature>
<feature type="helix" evidence="4">
    <location>
        <begin position="691"/>
        <end position="707"/>
    </location>
</feature>
<feature type="strand" evidence="4">
    <location>
        <begin position="713"/>
        <end position="715"/>
    </location>
</feature>
<feature type="helix" evidence="4">
    <location>
        <begin position="721"/>
        <end position="751"/>
    </location>
</feature>
<sequence>MRISPPEREAKKVKIVIDKDPVSTSFDKWAVPGHFSRTLAKGPKTTTWIWNLHADVHDFDSYTSDLEDVSRKIFSAHFGHLAVVFIWLSGAYFHGARFSNYEAWLSNPTTIKPSAQVVWPIVGQEILNGDVGGGFQGIQITSGLFQMWRASGITTELQLYVTAIGALVMAALMLFAGWFHYHKAAPKLEWFQNAESMMNHHLAGLFGLGSLSWAGHQIHVSLPVNKLLDSGVSPQEIPLPHEFILNKDLIAQLYPSFGQGLTPFFTLNWNEYSDFLTFKGGLNPVTGGLWLSDRAHHHLAIAVLFIVAGHMYRTNWGIGHSMKEMLETHKGPFTGEGHKGLYEIFTNSWHAQLSLNLALFGSLSIIVAHHMYSMPPYPYLATDYATSLCLFTHHVWIGGFLIVGAGAHAAIFMVRDYDPAQNYNNLLDRVLRHRDAIISHLNWVCIFLGFHSFGLYIHNDTMRALGRPQDMFSDAAIQLQPVFAQWVQGVNSAAAGNTAPNALRNASYAFGGDIVSVGEKVAMMPISLGTADFLVHHIHAFTIHVTVLILLKGVLFARNSRLIPDKANLGFRFPCDGPGRGGTCQVSAWDHVFLGLFWMYNSLSVVLFHFSWKMQSDVWGNVTADGAVSHITGNNFAQSSITINGWLRDFLWAQASQVIQSYGSALSAYGLMFLGAHFIWAFSLMFLFSGRGYWQELIESIVWAHNKLKFAPSIQPRALSITQGRAVGVAHYLLGGIATTWSFFHARIISVG</sequence>
<name>PSAA_CYAPA</name>
<reference key="1">
    <citation type="journal article" date="1995" name="Plant Mol. Biol. Rep.">
        <title>Nucleotide sequence of the cyanelle DNA from Cyanophora paradoxa.</title>
        <authorList>
            <person name="Stirewalt V.L."/>
            <person name="Michalowski C.B."/>
            <person name="Loeffelhardt W."/>
            <person name="Bohnert H.J."/>
            <person name="Bryant D.A."/>
        </authorList>
    </citation>
    <scope>NUCLEOTIDE SEQUENCE [LARGE SCALE GENOMIC DNA]</scope>
    <source>
        <strain>UTEX LB 555 / Pringsheim</strain>
    </source>
</reference>
<reference key="2">
    <citation type="book" date="1997" name="Eukaryotism and symbiosis">
        <title>The complete sequence of the cyanelle genome of Cyanophora paradoxa: the genetic complexity of a primitive plastid.</title>
        <editorList>
            <person name="Schenk H.E.A."/>
            <person name="Herrmann R."/>
            <person name="Jeon K.W."/>
            <person name="Mueller N.E."/>
            <person name="Schwemmler W."/>
        </editorList>
        <authorList>
            <person name="Loeffelhardt W."/>
            <person name="Stirewalt V.L."/>
            <person name="Michalowski C.B."/>
            <person name="Annarella M."/>
            <person name="Farley J.Y."/>
            <person name="Schluchter W.M."/>
            <person name="Chung S."/>
            <person name="Newmann-Spallart C."/>
            <person name="Steiner J.M."/>
            <person name="Jakowitsch J."/>
            <person name="Bohnert H.J."/>
            <person name="Bryant D.A."/>
        </authorList>
    </citation>
    <scope>NUCLEOTIDE SEQUENCE [LARGE SCALE GENOMIC DNA]</scope>
    <source>
        <strain>UTEX LB 555 / Pringsheim</strain>
    </source>
</reference>
<gene>
    <name evidence="2" type="primary">psaA</name>
</gene>
<geneLocation type="cyanelle"/>
<comment type="function">
    <text>PsaA and PsaB bind P700, the primary electron donor of photosystem I (PSI), as well as the electron acceptors A0, A1 and FX. PSI is a cytochrome c6-ferredoxin oxidoreductase, converting photonic excitation into a charge separation, which transfers an electron from the donor P700 chlorophyll pair to the spectroscopically characterized acceptors A0, A1, FX, FA and FB in turn. Oxidized P700 is reduced on the lumenal side of the thylakoid membrane by cytochrome c6.</text>
</comment>
<comment type="catalytic activity">
    <reaction evidence="2">
        <text>reduced [plastocyanin] + hnu + oxidized [2Fe-2S]-[ferredoxin] = oxidized [plastocyanin] + reduced [2Fe-2S]-[ferredoxin]</text>
        <dbReference type="Rhea" id="RHEA:30407"/>
        <dbReference type="Rhea" id="RHEA-COMP:10000"/>
        <dbReference type="Rhea" id="RHEA-COMP:10001"/>
        <dbReference type="Rhea" id="RHEA-COMP:10039"/>
        <dbReference type="Rhea" id="RHEA-COMP:10040"/>
        <dbReference type="ChEBI" id="CHEBI:29036"/>
        <dbReference type="ChEBI" id="CHEBI:30212"/>
        <dbReference type="ChEBI" id="CHEBI:33737"/>
        <dbReference type="ChEBI" id="CHEBI:33738"/>
        <dbReference type="ChEBI" id="CHEBI:49552"/>
        <dbReference type="EC" id="1.97.1.12"/>
    </reaction>
</comment>
<comment type="cofactor">
    <text evidence="2">P700 is a chlorophyll a/chlorophyll a' dimer, A0 is one or more chlorophyll a, A1 is one or both phylloquinones and FX is a shared 4Fe-4S iron-sulfur center.</text>
</comment>
<comment type="subunit">
    <text evidence="2">The PsaA/B heterodimer binds the P700 chlorophyll special pair and subsequent electron acceptors. PSI consists of a core antenna complex that captures photons, and an electron transfer chain that converts photonic excitation into a charge separation. The eukaryotic PSI reaction center is composed of at least 11 subunits.</text>
</comment>
<comment type="subcellular location">
    <subcellularLocation>
        <location evidence="1">Plastid</location>
        <location evidence="1">Cyanelle thylakoid membrane</location>
        <topology evidence="2">Multi-pass membrane protein</topology>
    </subcellularLocation>
</comment>
<comment type="similarity">
    <text evidence="2">Belongs to the PsaA/PsaB family.</text>
</comment>
<dbReference type="EC" id="1.97.1.12" evidence="2"/>
<dbReference type="EMBL" id="U30821">
    <property type="protein sequence ID" value="AAA81181.1"/>
    <property type="molecule type" value="Genomic_DNA"/>
</dbReference>
<dbReference type="PIR" id="T06838">
    <property type="entry name" value="T06838"/>
</dbReference>
<dbReference type="RefSeq" id="NP_043150.1">
    <property type="nucleotide sequence ID" value="NC_001675.1"/>
</dbReference>
<dbReference type="PDB" id="7DR0">
    <property type="method" value="EM"/>
    <property type="resolution" value="3.30 A"/>
    <property type="chains" value="A=1-752"/>
</dbReference>
<dbReference type="PDB" id="7DR1">
    <property type="method" value="EM"/>
    <property type="resolution" value="3.20 A"/>
    <property type="chains" value="A=1-752"/>
</dbReference>
<dbReference type="PDBsum" id="7DR0"/>
<dbReference type="PDBsum" id="7DR1"/>
<dbReference type="EMDB" id="EMD-30820"/>
<dbReference type="SMR" id="P48112"/>
<dbReference type="GeneID" id="801508"/>
<dbReference type="GO" id="GO:0009535">
    <property type="term" value="C:chloroplast thylakoid membrane"/>
    <property type="evidence" value="ECO:0007669"/>
    <property type="project" value="TreeGrafter"/>
</dbReference>
<dbReference type="GO" id="GO:0033115">
    <property type="term" value="C:cyanelle thylakoid membrane"/>
    <property type="evidence" value="ECO:0007669"/>
    <property type="project" value="UniProtKB-SubCell"/>
</dbReference>
<dbReference type="GO" id="GO:0009522">
    <property type="term" value="C:photosystem I"/>
    <property type="evidence" value="ECO:0007669"/>
    <property type="project" value="UniProtKB-KW"/>
</dbReference>
<dbReference type="GO" id="GO:0051539">
    <property type="term" value="F:4 iron, 4 sulfur cluster binding"/>
    <property type="evidence" value="ECO:0007669"/>
    <property type="project" value="UniProtKB-KW"/>
</dbReference>
<dbReference type="GO" id="GO:0016168">
    <property type="term" value="F:chlorophyll binding"/>
    <property type="evidence" value="ECO:0007669"/>
    <property type="project" value="UniProtKB-KW"/>
</dbReference>
<dbReference type="GO" id="GO:0009055">
    <property type="term" value="F:electron transfer activity"/>
    <property type="evidence" value="ECO:0007669"/>
    <property type="project" value="UniProtKB-UniRule"/>
</dbReference>
<dbReference type="GO" id="GO:0000287">
    <property type="term" value="F:magnesium ion binding"/>
    <property type="evidence" value="ECO:0007669"/>
    <property type="project" value="UniProtKB-UniRule"/>
</dbReference>
<dbReference type="GO" id="GO:0016491">
    <property type="term" value="F:oxidoreductase activity"/>
    <property type="evidence" value="ECO:0007669"/>
    <property type="project" value="UniProtKB-KW"/>
</dbReference>
<dbReference type="GO" id="GO:0015979">
    <property type="term" value="P:photosynthesis"/>
    <property type="evidence" value="ECO:0007669"/>
    <property type="project" value="UniProtKB-UniRule"/>
</dbReference>
<dbReference type="FunFam" id="1.20.1130.10:FF:000001">
    <property type="entry name" value="Photosystem I P700 chlorophyll a apoprotein A2"/>
    <property type="match status" value="1"/>
</dbReference>
<dbReference type="Gene3D" id="1.20.1130.10">
    <property type="entry name" value="Photosystem I PsaA/PsaB"/>
    <property type="match status" value="1"/>
</dbReference>
<dbReference type="HAMAP" id="MF_00458">
    <property type="entry name" value="PSI_PsaA"/>
    <property type="match status" value="1"/>
</dbReference>
<dbReference type="InterPro" id="IPR006243">
    <property type="entry name" value="PSI_PsaA"/>
</dbReference>
<dbReference type="InterPro" id="IPR001280">
    <property type="entry name" value="PSI_PsaA/B"/>
</dbReference>
<dbReference type="InterPro" id="IPR020586">
    <property type="entry name" value="PSI_PsaA/B_CS"/>
</dbReference>
<dbReference type="InterPro" id="IPR036408">
    <property type="entry name" value="PSI_PsaA/B_sf"/>
</dbReference>
<dbReference type="NCBIfam" id="TIGR01335">
    <property type="entry name" value="psaA"/>
    <property type="match status" value="1"/>
</dbReference>
<dbReference type="PANTHER" id="PTHR30128">
    <property type="entry name" value="OUTER MEMBRANE PROTEIN, OMPA-RELATED"/>
    <property type="match status" value="1"/>
</dbReference>
<dbReference type="PANTHER" id="PTHR30128:SF19">
    <property type="entry name" value="PHOTOSYSTEM I P700 CHLOROPHYLL A APOPROTEIN A1-RELATED"/>
    <property type="match status" value="1"/>
</dbReference>
<dbReference type="Pfam" id="PF00223">
    <property type="entry name" value="PsaA_PsaB"/>
    <property type="match status" value="1"/>
</dbReference>
<dbReference type="PIRSF" id="PIRSF002905">
    <property type="entry name" value="PSI_A"/>
    <property type="match status" value="1"/>
</dbReference>
<dbReference type="PRINTS" id="PR00257">
    <property type="entry name" value="PHOTSYSPSAAB"/>
</dbReference>
<dbReference type="SUPFAM" id="SSF81558">
    <property type="entry name" value="Photosystem I subunits PsaA/PsaB"/>
    <property type="match status" value="1"/>
</dbReference>
<dbReference type="PROSITE" id="PS00419">
    <property type="entry name" value="PHOTOSYSTEM_I_PSAAB"/>
    <property type="match status" value="1"/>
</dbReference>
<accession>P48112</accession>
<evidence type="ECO:0000250" key="1"/>
<evidence type="ECO:0000255" key="2">
    <source>
        <dbReference type="HAMAP-Rule" id="MF_00458"/>
    </source>
</evidence>
<evidence type="ECO:0007829" key="3">
    <source>
        <dbReference type="PDB" id="7DR0"/>
    </source>
</evidence>
<evidence type="ECO:0007829" key="4">
    <source>
        <dbReference type="PDB" id="7DR1"/>
    </source>
</evidence>
<organism>
    <name type="scientific">Cyanophora paradoxa</name>
    <dbReference type="NCBI Taxonomy" id="2762"/>
    <lineage>
        <taxon>Eukaryota</taxon>
        <taxon>Glaucocystophyceae</taxon>
        <taxon>Cyanophoraceae</taxon>
        <taxon>Cyanophora</taxon>
    </lineage>
</organism>
<proteinExistence type="evidence at protein level"/>
<protein>
    <recommendedName>
        <fullName evidence="2">Photosystem I P700 chlorophyll a apoprotein A1</fullName>
        <ecNumber evidence="2">1.97.1.12</ecNumber>
    </recommendedName>
    <alternativeName>
        <fullName evidence="2">PSI-A</fullName>
    </alternativeName>
    <alternativeName>
        <fullName evidence="2">PsaA</fullName>
    </alternativeName>
</protein>